<organismHost>
    <name type="scientific">Ornithodoros</name>
    <name type="common">relapsing fever ticks</name>
    <dbReference type="NCBI Taxonomy" id="6937"/>
</organismHost>
<organismHost>
    <name type="scientific">Phacochoerus aethiopicus</name>
    <name type="common">Warthog</name>
    <dbReference type="NCBI Taxonomy" id="85517"/>
</organismHost>
<organismHost>
    <name type="scientific">Phacochoerus africanus</name>
    <name type="common">Warthog</name>
    <dbReference type="NCBI Taxonomy" id="41426"/>
</organismHost>
<organismHost>
    <name type="scientific">Potamochoerus larvatus</name>
    <name type="common">Bushpig</name>
    <dbReference type="NCBI Taxonomy" id="273792"/>
</organismHost>
<organismHost>
    <name type="scientific">Sus scrofa</name>
    <name type="common">Pig</name>
    <dbReference type="NCBI Taxonomy" id="9823"/>
</organismHost>
<proteinExistence type="inferred from homology"/>
<sequence length="498" mass="58610">MFSLQEICRKNIYFLPDWLSEHVIQRLGLYWEKHGSLQRIGDDYVLIQQDLIIPINEALRMAGEEGSDEVVQLLLLWEGNIHYAIIGALEGDHYSLIRKLYDQIEDCHDILPLIQDPKIFEKCHELDKSCNILCLVLHAVKNDMPCILQDYKTHLSGEDIQVVFETACRSQKYDIVRWMGQNIAIYNPEVIFNIAFDKINTTLLSIGYTLLFNHRINNMNENIDSLLTQHLEWAAGMGLLHFMLETLKYGGDVTIAVLSEAVKYDHRKVLDYFLRRKNLYQEDLEELLLLAIRADCSKKTLNLLLSYLNYSINNIRKKILQCVKEYETTIIIKILWKRKINLIGPILADFIGYHSYTYMVDFMREFSIHPEKMIKMAARESREDLIIKFSKNVCKEPKDRLHYLKSLVYTMRHKEGKQLLIYTIHNLYKACHLESKEMFNLARFYARHNAVIQFKSICQDLSKLNINIKNLLLECLRIAIKKNYPQLIRTIKTDMSYE</sequence>
<dbReference type="EMBL" id="AY261366">
    <property type="status" value="NOT_ANNOTATED_CDS"/>
    <property type="molecule type" value="Genomic_DNA"/>
</dbReference>
<dbReference type="SMR" id="P0C9T9"/>
<dbReference type="Proteomes" id="UP000000858">
    <property type="component" value="Segment"/>
</dbReference>
<dbReference type="InterPro" id="IPR004858">
    <property type="entry name" value="MGF_505"/>
</dbReference>
<dbReference type="Pfam" id="PF03158">
    <property type="entry name" value="DUF249"/>
    <property type="match status" value="1"/>
</dbReference>
<keyword id="KW-0244">Early protein</keyword>
<name>5055R_ASFWA</name>
<gene>
    <name type="ordered locus">War-039</name>
</gene>
<accession>P0C9T9</accession>
<reference key="1">
    <citation type="submission" date="2003-03" db="EMBL/GenBank/DDBJ databases">
        <title>African swine fever virus genomes.</title>
        <authorList>
            <person name="Kutish G.F."/>
            <person name="Rock D.L."/>
        </authorList>
    </citation>
    <scope>NUCLEOTIDE SEQUENCE [LARGE SCALE GENOMIC DNA]</scope>
</reference>
<organism>
    <name type="scientific">African swine fever virus (isolate Warthog/Namibia/Wart80/1980)</name>
    <name type="common">ASFV</name>
    <dbReference type="NCBI Taxonomy" id="561444"/>
    <lineage>
        <taxon>Viruses</taxon>
        <taxon>Varidnaviria</taxon>
        <taxon>Bamfordvirae</taxon>
        <taxon>Nucleocytoviricota</taxon>
        <taxon>Pokkesviricetes</taxon>
        <taxon>Asfuvirales</taxon>
        <taxon>Asfarviridae</taxon>
        <taxon>Asfivirus</taxon>
        <taxon>African swine fever virus</taxon>
    </lineage>
</organism>
<feature type="chain" id="PRO_0000373336" description="Protein MGF 505-5R">
    <location>
        <begin position="1"/>
        <end position="498"/>
    </location>
</feature>
<protein>
    <recommendedName>
        <fullName>Protein MGF 505-5R</fullName>
    </recommendedName>
</protein>
<evidence type="ECO:0000250" key="1">
    <source>
        <dbReference type="UniProtKB" id="Q89777"/>
    </source>
</evidence>
<evidence type="ECO:0000305" key="2"/>
<comment type="function">
    <text evidence="1">Plays a role in virus cell tropism, and may be required for efficient virus replication in macrophages.</text>
</comment>
<comment type="induction">
    <text evidence="2">Expressed in the early phase of the viral replicative cycle.</text>
</comment>
<comment type="similarity">
    <text evidence="2">Belongs to the asfivirus MGF 505 family.</text>
</comment>